<sequence length="488" mass="53290">MADVRKLKNYINGEWVESRADKYEDVINPATGEVLCQVPISTRAELDQAAVIAEQAFEKWSQVAVPRRARVLFSFQQLLIQHKEELARLITLENGKNLSEARGEVQRGIENVEFAAGAPTLMMGDSLASIATDVEAANYRYPVGVVGGIAPFNFPMMVPCWMFPMAIALGNSFILKPSERTPLLMEKLVELFSEAGLPKGVFNVVYGAHDVVNGILENEIIKAVSFVGSKPVGEYVYKTGSANLKRVQALTGAKNHTIVLNDADLEDTVTNVISAAFGSAGERCMACAVVTVEEGIADEFLAALRTAAQNVKIGNGLDDGVFLGPVIREENQKRTIAYIEKGLEEGAKLTVDGRETGLSEGHFVGPTILEDVTTDMTIWKDEIFAPVLSVIRVKNLQEAVRVANQSEFANGACIFTNNAKAIRYFREKIDAGMLGVNLGVPAPMAFFPFSGWKSSFYGTLHANGKDSVDFYTHKKVVTARYSLKGYEE</sequence>
<name>IOLA_LISMC</name>
<gene>
    <name evidence="1" type="primary">iolA</name>
    <name type="ordered locus">Lm4b_00401</name>
</gene>
<protein>
    <recommendedName>
        <fullName evidence="1">Malonate-semialdehyde dehydrogenase</fullName>
        <shortName evidence="1">MSA dehydrogenase</shortName>
        <ecNumber evidence="1">1.2.1.27</ecNumber>
    </recommendedName>
    <alternativeName>
        <fullName evidence="1">Methylmalonate-semialdehyde dehydrogenase</fullName>
        <shortName evidence="1">MMSA dehydrogenase</shortName>
        <shortName evidence="1">MSDH</shortName>
    </alternativeName>
</protein>
<keyword id="KW-0520">NAD</keyword>
<keyword id="KW-0560">Oxidoreductase</keyword>
<comment type="function">
    <text evidence="1">Catalyzes the oxidation of malonate semialdehyde (MSA) and methylmalonate semialdehyde (MMSA) into acetyl-CoA and propanoyl-CoA, respectively. Is involved in a myo-inositol catabolic pathway. Bicarbonate, and not CO2, is the end-product of the enzymatic reaction.</text>
</comment>
<comment type="catalytic activity">
    <reaction evidence="1">
        <text>3-oxopropanoate + NAD(+) + CoA + H2O = hydrogencarbonate + acetyl-CoA + NADH + H(+)</text>
        <dbReference type="Rhea" id="RHEA:76615"/>
        <dbReference type="ChEBI" id="CHEBI:15377"/>
        <dbReference type="ChEBI" id="CHEBI:15378"/>
        <dbReference type="ChEBI" id="CHEBI:17544"/>
        <dbReference type="ChEBI" id="CHEBI:33190"/>
        <dbReference type="ChEBI" id="CHEBI:57287"/>
        <dbReference type="ChEBI" id="CHEBI:57288"/>
        <dbReference type="ChEBI" id="CHEBI:57540"/>
        <dbReference type="ChEBI" id="CHEBI:57945"/>
        <dbReference type="EC" id="1.2.1.27"/>
    </reaction>
    <physiologicalReaction direction="left-to-right" evidence="1">
        <dbReference type="Rhea" id="RHEA:76616"/>
    </physiologicalReaction>
</comment>
<comment type="catalytic activity">
    <reaction evidence="1">
        <text>2-methyl-3-oxopropanoate + NAD(+) + CoA + H2O = propanoyl-CoA + hydrogencarbonate + NADH + H(+)</text>
        <dbReference type="Rhea" id="RHEA:20804"/>
        <dbReference type="ChEBI" id="CHEBI:15377"/>
        <dbReference type="ChEBI" id="CHEBI:15378"/>
        <dbReference type="ChEBI" id="CHEBI:17544"/>
        <dbReference type="ChEBI" id="CHEBI:57287"/>
        <dbReference type="ChEBI" id="CHEBI:57392"/>
        <dbReference type="ChEBI" id="CHEBI:57540"/>
        <dbReference type="ChEBI" id="CHEBI:57700"/>
        <dbReference type="ChEBI" id="CHEBI:57945"/>
        <dbReference type="EC" id="1.2.1.27"/>
    </reaction>
    <physiologicalReaction direction="left-to-right" evidence="1">
        <dbReference type="Rhea" id="RHEA:20805"/>
    </physiologicalReaction>
</comment>
<comment type="pathway">
    <text evidence="1">Polyol metabolism; myo-inositol degradation into acetyl-CoA; acetyl-CoA from myo-inositol: step 7/7.</text>
</comment>
<comment type="subunit">
    <text evidence="1">Homotetramer.</text>
</comment>
<comment type="similarity">
    <text evidence="1">Belongs to the aldehyde dehydrogenase family. IolA subfamily.</text>
</comment>
<feature type="chain" id="PRO_1000215882" description="Malonate-semialdehyde dehydrogenase">
    <location>
        <begin position="1"/>
        <end position="488"/>
    </location>
</feature>
<feature type="active site" description="Nucleophile" evidence="1">
    <location>
        <position position="284"/>
    </location>
</feature>
<feature type="binding site" evidence="1">
    <location>
        <position position="150"/>
    </location>
    <ligand>
        <name>NAD(+)</name>
        <dbReference type="ChEBI" id="CHEBI:57540"/>
    </ligand>
</feature>
<feature type="binding site" evidence="1">
    <location>
        <position position="152"/>
    </location>
    <ligand>
        <name>NAD(+)</name>
        <dbReference type="ChEBI" id="CHEBI:57540"/>
    </ligand>
</feature>
<feature type="binding site" evidence="1">
    <location>
        <position position="176"/>
    </location>
    <ligand>
        <name>NAD(+)</name>
        <dbReference type="ChEBI" id="CHEBI:57540"/>
    </ligand>
</feature>
<feature type="binding site" evidence="1">
    <location>
        <position position="179"/>
    </location>
    <ligand>
        <name>NAD(+)</name>
        <dbReference type="ChEBI" id="CHEBI:57540"/>
    </ligand>
</feature>
<feature type="binding site" evidence="1">
    <location>
        <position position="180"/>
    </location>
    <ligand>
        <name>NAD(+)</name>
        <dbReference type="ChEBI" id="CHEBI:57540"/>
    </ligand>
</feature>
<feature type="binding site" evidence="1">
    <location>
        <position position="229"/>
    </location>
    <ligand>
        <name>NAD(+)</name>
        <dbReference type="ChEBI" id="CHEBI:57540"/>
    </ligand>
</feature>
<feature type="binding site" evidence="1">
    <location>
        <position position="251"/>
    </location>
    <ligand>
        <name>NAD(+)</name>
        <dbReference type="ChEBI" id="CHEBI:57540"/>
    </ligand>
</feature>
<feature type="binding site" evidence="1">
    <location>
        <position position="382"/>
    </location>
    <ligand>
        <name>NAD(+)</name>
        <dbReference type="ChEBI" id="CHEBI:57540"/>
    </ligand>
</feature>
<evidence type="ECO:0000255" key="1">
    <source>
        <dbReference type="HAMAP-Rule" id="MF_01670"/>
    </source>
</evidence>
<organism>
    <name type="scientific">Listeria monocytogenes serotype 4b (strain CLIP80459)</name>
    <dbReference type="NCBI Taxonomy" id="568819"/>
    <lineage>
        <taxon>Bacteria</taxon>
        <taxon>Bacillati</taxon>
        <taxon>Bacillota</taxon>
        <taxon>Bacilli</taxon>
        <taxon>Bacillales</taxon>
        <taxon>Listeriaceae</taxon>
        <taxon>Listeria</taxon>
    </lineage>
</organism>
<reference key="1">
    <citation type="journal article" date="2012" name="BMC Genomics">
        <title>Comparative genomics and transcriptomics of lineages I, II, and III strains of Listeria monocytogenes.</title>
        <authorList>
            <person name="Hain T."/>
            <person name="Ghai R."/>
            <person name="Billion A."/>
            <person name="Kuenne C.T."/>
            <person name="Steinweg C."/>
            <person name="Izar B."/>
            <person name="Mohamed W."/>
            <person name="Mraheil M."/>
            <person name="Domann E."/>
            <person name="Schaffrath S."/>
            <person name="Karst U."/>
            <person name="Goesmann A."/>
            <person name="Oehm S."/>
            <person name="Puhler A."/>
            <person name="Merkl R."/>
            <person name="Vorwerk S."/>
            <person name="Glaser P."/>
            <person name="Garrido P."/>
            <person name="Rusniok C."/>
            <person name="Buchrieser C."/>
            <person name="Goebel W."/>
            <person name="Chakraborty T."/>
        </authorList>
    </citation>
    <scope>NUCLEOTIDE SEQUENCE [LARGE SCALE GENOMIC DNA]</scope>
    <source>
        <strain>CLIP80459</strain>
    </source>
</reference>
<proteinExistence type="inferred from homology"/>
<dbReference type="EC" id="1.2.1.27" evidence="1"/>
<dbReference type="EMBL" id="FM242711">
    <property type="protein sequence ID" value="CAS04169.1"/>
    <property type="molecule type" value="Genomic_DNA"/>
</dbReference>
<dbReference type="RefSeq" id="WP_003728135.1">
    <property type="nucleotide sequence ID" value="NC_012488.1"/>
</dbReference>
<dbReference type="SMR" id="C1KZ99"/>
<dbReference type="KEGG" id="lmc:Lm4b_00401"/>
<dbReference type="HOGENOM" id="CLU_005391_1_10_9"/>
<dbReference type="UniPathway" id="UPA00076">
    <property type="reaction ID" value="UER00148"/>
</dbReference>
<dbReference type="GO" id="GO:0018478">
    <property type="term" value="F:malonate-semialdehyde dehydrogenase (acetylating) activity"/>
    <property type="evidence" value="ECO:0007669"/>
    <property type="project" value="UniProtKB-UniRule"/>
</dbReference>
<dbReference type="GO" id="GO:0004491">
    <property type="term" value="F:methylmalonate-semialdehyde dehydrogenase (acylating, NAD) activity"/>
    <property type="evidence" value="ECO:0007669"/>
    <property type="project" value="UniProtKB-UniRule"/>
</dbReference>
<dbReference type="GO" id="GO:0019310">
    <property type="term" value="P:inositol catabolic process"/>
    <property type="evidence" value="ECO:0007669"/>
    <property type="project" value="UniProtKB-UniRule"/>
</dbReference>
<dbReference type="GO" id="GO:0006210">
    <property type="term" value="P:thymine catabolic process"/>
    <property type="evidence" value="ECO:0007669"/>
    <property type="project" value="TreeGrafter"/>
</dbReference>
<dbReference type="GO" id="GO:0006574">
    <property type="term" value="P:valine catabolic process"/>
    <property type="evidence" value="ECO:0007669"/>
    <property type="project" value="TreeGrafter"/>
</dbReference>
<dbReference type="CDD" id="cd07085">
    <property type="entry name" value="ALDH_F6_MMSDH"/>
    <property type="match status" value="1"/>
</dbReference>
<dbReference type="FunFam" id="3.40.309.10:FF:000002">
    <property type="entry name" value="Methylmalonate-semialdehyde dehydrogenase (Acylating)"/>
    <property type="match status" value="1"/>
</dbReference>
<dbReference type="FunFam" id="3.40.605.10:FF:000003">
    <property type="entry name" value="Methylmalonate-semialdehyde dehydrogenase [acylating]"/>
    <property type="match status" value="1"/>
</dbReference>
<dbReference type="Gene3D" id="3.40.605.10">
    <property type="entry name" value="Aldehyde Dehydrogenase, Chain A, domain 1"/>
    <property type="match status" value="1"/>
</dbReference>
<dbReference type="Gene3D" id="3.40.309.10">
    <property type="entry name" value="Aldehyde Dehydrogenase, Chain A, domain 2"/>
    <property type="match status" value="1"/>
</dbReference>
<dbReference type="HAMAP" id="MF_01670">
    <property type="entry name" value="IolA"/>
    <property type="match status" value="1"/>
</dbReference>
<dbReference type="InterPro" id="IPR016161">
    <property type="entry name" value="Ald_DH/histidinol_DH"/>
</dbReference>
<dbReference type="InterPro" id="IPR016163">
    <property type="entry name" value="Ald_DH_C"/>
</dbReference>
<dbReference type="InterPro" id="IPR016160">
    <property type="entry name" value="Ald_DH_CS_CYS"/>
</dbReference>
<dbReference type="InterPro" id="IPR016162">
    <property type="entry name" value="Ald_DH_N"/>
</dbReference>
<dbReference type="InterPro" id="IPR015590">
    <property type="entry name" value="Aldehyde_DH_dom"/>
</dbReference>
<dbReference type="InterPro" id="IPR010061">
    <property type="entry name" value="MeMal-semiAld_DH"/>
</dbReference>
<dbReference type="InterPro" id="IPR023510">
    <property type="entry name" value="MSDH_GmP_bac"/>
</dbReference>
<dbReference type="NCBIfam" id="TIGR01722">
    <property type="entry name" value="MMSDH"/>
    <property type="match status" value="1"/>
</dbReference>
<dbReference type="PANTHER" id="PTHR43866">
    <property type="entry name" value="MALONATE-SEMIALDEHYDE DEHYDROGENASE"/>
    <property type="match status" value="1"/>
</dbReference>
<dbReference type="PANTHER" id="PTHR43866:SF4">
    <property type="entry name" value="MALONATE-SEMIALDEHYDE DEHYDROGENASE"/>
    <property type="match status" value="1"/>
</dbReference>
<dbReference type="Pfam" id="PF00171">
    <property type="entry name" value="Aldedh"/>
    <property type="match status" value="1"/>
</dbReference>
<dbReference type="SUPFAM" id="SSF53720">
    <property type="entry name" value="ALDH-like"/>
    <property type="match status" value="1"/>
</dbReference>
<dbReference type="PROSITE" id="PS00070">
    <property type="entry name" value="ALDEHYDE_DEHYDR_CYS"/>
    <property type="match status" value="1"/>
</dbReference>
<accession>C1KZ99</accession>